<accession>Q49760</accession>
<comment type="subcellular location">
    <subcellularLocation>
        <location evidence="2">Membrane</location>
        <topology evidence="2">Single-pass membrane protein</topology>
    </subcellularLocation>
</comment>
<name>Y614_MYCLE</name>
<organism>
    <name type="scientific">Mycobacterium leprae (strain TN)</name>
    <dbReference type="NCBI Taxonomy" id="272631"/>
    <lineage>
        <taxon>Bacteria</taxon>
        <taxon>Bacillati</taxon>
        <taxon>Actinomycetota</taxon>
        <taxon>Actinomycetes</taxon>
        <taxon>Mycobacteriales</taxon>
        <taxon>Mycobacteriaceae</taxon>
        <taxon>Mycobacterium</taxon>
    </lineage>
</organism>
<protein>
    <recommendedName>
        <fullName>Uncharacterized protein ML0614</fullName>
    </recommendedName>
</protein>
<proteinExistence type="predicted"/>
<dbReference type="EMBL" id="U00016">
    <property type="protein sequence ID" value="AAA17165.1"/>
    <property type="molecule type" value="Genomic_DNA"/>
</dbReference>
<dbReference type="EMBL" id="AL583919">
    <property type="protein sequence ID" value="CAC30122.1"/>
    <property type="molecule type" value="Genomic_DNA"/>
</dbReference>
<dbReference type="PIR" id="S72597">
    <property type="entry name" value="S72597"/>
</dbReference>
<dbReference type="RefSeq" id="NP_301514.1">
    <property type="nucleotide sequence ID" value="NC_002677.1"/>
</dbReference>
<dbReference type="KEGG" id="mle:ML0614"/>
<dbReference type="PATRIC" id="fig|272631.5.peg.1085"/>
<dbReference type="Leproma" id="ML0614"/>
<dbReference type="eggNOG" id="ENOG5031K4H">
    <property type="taxonomic scope" value="Bacteria"/>
</dbReference>
<dbReference type="HOGENOM" id="CLU_2369824_0_0_11"/>
<dbReference type="OrthoDB" id="4559844at2"/>
<dbReference type="Proteomes" id="UP000000806">
    <property type="component" value="Chromosome"/>
</dbReference>
<dbReference type="GO" id="GO:0016020">
    <property type="term" value="C:membrane"/>
    <property type="evidence" value="ECO:0007669"/>
    <property type="project" value="UniProtKB-SubCell"/>
</dbReference>
<sequence>MWKARTALGDLDTVFYDAGTANGTNGISVSPVNGFLNWWDSIELWLSGLAFVLQAALVMPVVLAFAYGTALVLDFALGKGIQLMRRAYHPDSARG</sequence>
<feature type="chain" id="PRO_0000104152" description="Uncharacterized protein ML0614">
    <location>
        <begin position="1"/>
        <end position="95"/>
    </location>
</feature>
<feature type="transmembrane region" description="Helical" evidence="1">
    <location>
        <begin position="45"/>
        <end position="65"/>
    </location>
</feature>
<keyword id="KW-0472">Membrane</keyword>
<keyword id="KW-1185">Reference proteome</keyword>
<keyword id="KW-0812">Transmembrane</keyword>
<keyword id="KW-1133">Transmembrane helix</keyword>
<evidence type="ECO:0000255" key="1"/>
<evidence type="ECO:0000305" key="2"/>
<gene>
    <name type="ordered locus">ML0614</name>
    <name type="ORF">B1937_F2_47</name>
</gene>
<reference key="1">
    <citation type="submission" date="1994-03" db="EMBL/GenBank/DDBJ databases">
        <authorList>
            <person name="Smith D.R."/>
            <person name="Robison K."/>
        </authorList>
    </citation>
    <scope>NUCLEOTIDE SEQUENCE [GENOMIC DNA]</scope>
</reference>
<reference key="2">
    <citation type="journal article" date="2001" name="Nature">
        <title>Massive gene decay in the leprosy bacillus.</title>
        <authorList>
            <person name="Cole S.T."/>
            <person name="Eiglmeier K."/>
            <person name="Parkhill J."/>
            <person name="James K.D."/>
            <person name="Thomson N.R."/>
            <person name="Wheeler P.R."/>
            <person name="Honore N."/>
            <person name="Garnier T."/>
            <person name="Churcher C.M."/>
            <person name="Harris D.E."/>
            <person name="Mungall K.L."/>
            <person name="Basham D."/>
            <person name="Brown D."/>
            <person name="Chillingworth T."/>
            <person name="Connor R."/>
            <person name="Davies R.M."/>
            <person name="Devlin K."/>
            <person name="Duthoy S."/>
            <person name="Feltwell T."/>
            <person name="Fraser A."/>
            <person name="Hamlin N."/>
            <person name="Holroyd S."/>
            <person name="Hornsby T."/>
            <person name="Jagels K."/>
            <person name="Lacroix C."/>
            <person name="Maclean J."/>
            <person name="Moule S."/>
            <person name="Murphy L.D."/>
            <person name="Oliver K."/>
            <person name="Quail M.A."/>
            <person name="Rajandream M.A."/>
            <person name="Rutherford K.M."/>
            <person name="Rutter S."/>
            <person name="Seeger K."/>
            <person name="Simon S."/>
            <person name="Simmonds M."/>
            <person name="Skelton J."/>
            <person name="Squares R."/>
            <person name="Squares S."/>
            <person name="Stevens K."/>
            <person name="Taylor K."/>
            <person name="Whitehead S."/>
            <person name="Woodward J.R."/>
            <person name="Barrell B.G."/>
        </authorList>
    </citation>
    <scope>NUCLEOTIDE SEQUENCE [LARGE SCALE GENOMIC DNA]</scope>
    <source>
        <strain>TN</strain>
    </source>
</reference>